<reference key="1">
    <citation type="journal article" date="1994" name="Mol. Microbiol.">
        <title>Characterization of spo0A homologues in diverse Bacillus and Clostridium species identifies a probable DNA-binding domain.</title>
        <authorList>
            <person name="Brown D.P."/>
            <person name="Ganova-Raeva L."/>
            <person name="Green B.D."/>
            <person name="Wilkinson S.R."/>
            <person name="Young M."/>
            <person name="Youngman P."/>
        </authorList>
    </citation>
    <scope>NUCLEOTIDE SEQUENCE [GENOMIC DNA]</scope>
    <source>
        <strain>ATCC 6013 / DSM 525 / NCIB 9486 / VKM B-1774 / W5</strain>
    </source>
</reference>
<protein>
    <recommendedName>
        <fullName>Stage 0 sporulation protein A homolog</fullName>
    </recommendedName>
</protein>
<comment type="function">
    <text evidence="1">May play the central regulatory role in sporulation. It may be an element of the effector pathway responsible for the activation of sporulation genes in response to nutritional stress. Spo0A may act in concert with spo0H (a sigma factor) to control the expression of some genes that are critical to the sporulation process (By similarity).</text>
</comment>
<comment type="cofactor">
    <cofactor evidence="1">
        <name>Ca(2+)</name>
        <dbReference type="ChEBI" id="CHEBI:29108"/>
    </cofactor>
    <text evidence="1">Binds 1 Ca(2+) ion per subunit.</text>
</comment>
<comment type="subcellular location">
    <subcellularLocation>
        <location evidence="4">Cytoplasm</location>
    </subcellularLocation>
</comment>
<accession>P52940</accession>
<evidence type="ECO:0000250" key="1"/>
<evidence type="ECO:0000255" key="2"/>
<evidence type="ECO:0000255" key="3">
    <source>
        <dbReference type="PROSITE-ProRule" id="PRU00169"/>
    </source>
</evidence>
<evidence type="ECO:0000305" key="4"/>
<dbReference type="EMBL" id="U09982">
    <property type="protein sequence ID" value="AAA18883.1"/>
    <property type="molecule type" value="Unassigned_DNA"/>
</dbReference>
<dbReference type="PIR" id="S60880">
    <property type="entry name" value="S60880"/>
</dbReference>
<dbReference type="SMR" id="P52940"/>
<dbReference type="GO" id="GO:0005829">
    <property type="term" value="C:cytosol"/>
    <property type="evidence" value="ECO:0007669"/>
    <property type="project" value="TreeGrafter"/>
</dbReference>
<dbReference type="GO" id="GO:0032993">
    <property type="term" value="C:protein-DNA complex"/>
    <property type="evidence" value="ECO:0007669"/>
    <property type="project" value="TreeGrafter"/>
</dbReference>
<dbReference type="GO" id="GO:0005509">
    <property type="term" value="F:calcium ion binding"/>
    <property type="evidence" value="ECO:0007669"/>
    <property type="project" value="InterPro"/>
</dbReference>
<dbReference type="GO" id="GO:0003700">
    <property type="term" value="F:DNA-binding transcription factor activity"/>
    <property type="evidence" value="ECO:0007669"/>
    <property type="project" value="InterPro"/>
</dbReference>
<dbReference type="GO" id="GO:0000156">
    <property type="term" value="F:phosphorelay response regulator activity"/>
    <property type="evidence" value="ECO:0007669"/>
    <property type="project" value="TreeGrafter"/>
</dbReference>
<dbReference type="GO" id="GO:0000976">
    <property type="term" value="F:transcription cis-regulatory region binding"/>
    <property type="evidence" value="ECO:0007669"/>
    <property type="project" value="TreeGrafter"/>
</dbReference>
<dbReference type="GO" id="GO:0051606">
    <property type="term" value="P:detection of stimulus"/>
    <property type="evidence" value="ECO:0007669"/>
    <property type="project" value="InterPro"/>
</dbReference>
<dbReference type="GO" id="GO:0042173">
    <property type="term" value="P:regulation of sporulation resulting in formation of a cellular spore"/>
    <property type="evidence" value="ECO:0007669"/>
    <property type="project" value="InterPro"/>
</dbReference>
<dbReference type="GO" id="GO:0030435">
    <property type="term" value="P:sporulation resulting in formation of a cellular spore"/>
    <property type="evidence" value="ECO:0007669"/>
    <property type="project" value="UniProtKB-KW"/>
</dbReference>
<dbReference type="CDD" id="cd17561">
    <property type="entry name" value="REC_Spo0A"/>
    <property type="match status" value="1"/>
</dbReference>
<dbReference type="Gene3D" id="3.40.50.2300">
    <property type="match status" value="1"/>
</dbReference>
<dbReference type="Gene3D" id="1.10.10.10">
    <property type="entry name" value="Winged helix-like DNA-binding domain superfamily/Winged helix DNA-binding domain"/>
    <property type="match status" value="1"/>
</dbReference>
<dbReference type="InterPro" id="IPR011006">
    <property type="entry name" value="CheY-like_superfamily"/>
</dbReference>
<dbReference type="InterPro" id="IPR016032">
    <property type="entry name" value="Sig_transdc_resp-reg_C-effctor"/>
</dbReference>
<dbReference type="InterPro" id="IPR001789">
    <property type="entry name" value="Sig_transdc_resp-reg_receiver"/>
</dbReference>
<dbReference type="InterPro" id="IPR014879">
    <property type="entry name" value="Spo0A_C"/>
</dbReference>
<dbReference type="InterPro" id="IPR012052">
    <property type="entry name" value="Spore_0_A"/>
</dbReference>
<dbReference type="InterPro" id="IPR039420">
    <property type="entry name" value="WalR-like"/>
</dbReference>
<dbReference type="InterPro" id="IPR036388">
    <property type="entry name" value="WH-like_DNA-bd_sf"/>
</dbReference>
<dbReference type="NCBIfam" id="TIGR02875">
    <property type="entry name" value="spore_0_A"/>
    <property type="match status" value="1"/>
</dbReference>
<dbReference type="PANTHER" id="PTHR48111">
    <property type="entry name" value="REGULATOR OF RPOS"/>
    <property type="match status" value="1"/>
</dbReference>
<dbReference type="PANTHER" id="PTHR48111:SF1">
    <property type="entry name" value="TWO-COMPONENT RESPONSE REGULATOR ORR33"/>
    <property type="match status" value="1"/>
</dbReference>
<dbReference type="Pfam" id="PF00072">
    <property type="entry name" value="Response_reg"/>
    <property type="match status" value="1"/>
</dbReference>
<dbReference type="Pfam" id="PF08769">
    <property type="entry name" value="Spo0A_C"/>
    <property type="match status" value="1"/>
</dbReference>
<dbReference type="PIRSF" id="PIRSF002937">
    <property type="entry name" value="Res_reg_Spo0A"/>
    <property type="match status" value="1"/>
</dbReference>
<dbReference type="SMART" id="SM00448">
    <property type="entry name" value="REC"/>
    <property type="match status" value="1"/>
</dbReference>
<dbReference type="SUPFAM" id="SSF46894">
    <property type="entry name" value="C-terminal effector domain of the bipartite response regulators"/>
    <property type="match status" value="1"/>
</dbReference>
<dbReference type="SUPFAM" id="SSF52172">
    <property type="entry name" value="CheY-like"/>
    <property type="match status" value="1"/>
</dbReference>
<dbReference type="PROSITE" id="PS50110">
    <property type="entry name" value="RESPONSE_REGULATORY"/>
    <property type="match status" value="1"/>
</dbReference>
<organism>
    <name type="scientific">Clostridium pasteurianum</name>
    <dbReference type="NCBI Taxonomy" id="1501"/>
    <lineage>
        <taxon>Bacteria</taxon>
        <taxon>Bacillati</taxon>
        <taxon>Bacillota</taxon>
        <taxon>Clostridia</taxon>
        <taxon>Eubacteriales</taxon>
        <taxon>Clostridiaceae</taxon>
        <taxon>Clostridium</taxon>
    </lineage>
</organism>
<keyword id="KW-0010">Activator</keyword>
<keyword id="KW-0106">Calcium</keyword>
<keyword id="KW-0963">Cytoplasm</keyword>
<keyword id="KW-0238">DNA-binding</keyword>
<keyword id="KW-0479">Metal-binding</keyword>
<keyword id="KW-0597">Phosphoprotein</keyword>
<keyword id="KW-0678">Repressor</keyword>
<keyword id="KW-0749">Sporulation</keyword>
<keyword id="KW-0804">Transcription</keyword>
<keyword id="KW-0805">Transcription regulation</keyword>
<keyword id="KW-0902">Two-component regulatory system</keyword>
<gene>
    <name type="primary">spo0A</name>
</gene>
<sequence>MEYSKISVLIADDNKEFCNILNDYLLNQSDIVVVGIAKDGIEALKLIEEKKPDLVILDIIMPNMDGLVVLEKLANINIDPVPNVIVLSAVGQDKITQRAITLGADYYVVKPFDMDVFTKRIRQMFNNTILDSETKKTMPISEKAADVKISQSVPLDLEDESIIHEIGVPAHIKGYMYLREAINMVVDNIELLSAVTKELYPSIAKKYNTTASRVERAIRHAIEVAWSRGQVDTINKLFGYTIHNGKGKPTNSEFIAMIADKLRLKNKVKNVAQ</sequence>
<name>SP0A_CLOPA</name>
<proteinExistence type="inferred from homology"/>
<feature type="chain" id="PRO_0000081242" description="Stage 0 sporulation protein A homolog">
    <location>
        <begin position="1"/>
        <end position="273"/>
    </location>
</feature>
<feature type="domain" description="Response regulatory" evidence="3">
    <location>
        <begin position="7"/>
        <end position="125"/>
    </location>
</feature>
<feature type="DNA-binding region" description="H-T-H motif" evidence="2">
    <location>
        <begin position="201"/>
        <end position="220"/>
    </location>
</feature>
<feature type="binding site" evidence="1">
    <location>
        <position position="12"/>
    </location>
    <ligand>
        <name>Ca(2+)</name>
        <dbReference type="ChEBI" id="CHEBI:29108"/>
    </ligand>
</feature>
<feature type="binding site" evidence="1">
    <location>
        <position position="13"/>
    </location>
    <ligand>
        <name>Ca(2+)</name>
        <dbReference type="ChEBI" id="CHEBI:29108"/>
    </ligand>
</feature>
<feature type="binding site" evidence="1">
    <location>
        <position position="58"/>
    </location>
    <ligand>
        <name>Ca(2+)</name>
        <dbReference type="ChEBI" id="CHEBI:29108"/>
    </ligand>
</feature>
<feature type="modified residue" description="4-aspartylphosphate" evidence="3">
    <location>
        <position position="58"/>
    </location>
</feature>